<protein>
    <recommendedName>
        <fullName evidence="8">Leukotriene A-4 hydrolase</fullName>
        <shortName evidence="4">LTA-4 hydrolase</shortName>
        <ecNumber evidence="4 5">3.3.2.6</ecNumber>
    </recommendedName>
    <alternativeName>
        <fullName evidence="4">Leukotriene A(4) hydrolase</fullName>
    </alternativeName>
    <alternativeName>
        <fullName evidence="8">Tripeptide aminopeptidase LTA4H</fullName>
        <ecNumber evidence="5">3.4.11.4</ecNumber>
    </alternativeName>
</protein>
<keyword id="KW-0002">3D-structure</keyword>
<keyword id="KW-0963">Cytoplasm</keyword>
<keyword id="KW-0378">Hydrolase</keyword>
<keyword id="KW-0434">Leukotriene biosynthesis</keyword>
<keyword id="KW-0479">Metal-binding</keyword>
<keyword id="KW-0482">Metalloprotease</keyword>
<keyword id="KW-0645">Protease</keyword>
<keyword id="KW-1185">Reference proteome</keyword>
<keyword id="KW-0862">Zinc</keyword>
<evidence type="ECO:0000250" key="1">
    <source>
        <dbReference type="UniProtKB" id="P09960"/>
    </source>
</evidence>
<evidence type="ECO:0000255" key="2">
    <source>
        <dbReference type="PIRSR" id="PIRSR634015-1"/>
    </source>
</evidence>
<evidence type="ECO:0000255" key="3">
    <source>
        <dbReference type="PIRSR" id="PIRSR634015-3"/>
    </source>
</evidence>
<evidence type="ECO:0000255" key="4">
    <source>
        <dbReference type="RuleBase" id="RU361141"/>
    </source>
</evidence>
<evidence type="ECO:0000269" key="5">
    <source>
    </source>
</evidence>
<evidence type="ECO:0000269" key="6">
    <source>
    </source>
</evidence>
<evidence type="ECO:0000269" key="7">
    <source>
    </source>
</evidence>
<evidence type="ECO:0000305" key="8"/>
<evidence type="ECO:0000312" key="9">
    <source>
        <dbReference type="EMBL" id="AAH72036.1"/>
    </source>
</evidence>
<evidence type="ECO:0000312" key="10">
    <source>
        <dbReference type="Proteomes" id="UP000186698"/>
    </source>
</evidence>
<evidence type="ECO:0000312" key="11">
    <source>
        <dbReference type="RefSeq" id="NP_001085236.1"/>
    </source>
</evidence>
<evidence type="ECO:0000312" key="12">
    <source>
        <dbReference type="Xenbase" id="XB-GENE-955982"/>
    </source>
</evidence>
<evidence type="ECO:0007744" key="13">
    <source>
        <dbReference type="PDB" id="4GAA"/>
    </source>
</evidence>
<evidence type="ECO:0007829" key="14">
    <source>
        <dbReference type="PDB" id="4GAA"/>
    </source>
</evidence>
<sequence>MADPSSFASPEKFNIKHMHLKLHVDFTSRAIAASTSLTVRSLQDSLASLILDTKDLTIKKVAVNGKDATFALGTTHSFKGTPLEITLPFSLTRGQEVIVEIDSVTSPKSSALQWLNKEQTAGKIHPYLFSQCQATHCRSIIPCQDTPSVKFTYYSQVSVPKELMALMSALRDGELSEQSDSNRKIYRFKQNVPIPSYLIALVVGALEGRKVGPRTTIWTEKELLEPSVYEFAETEKMLKYAEDLAGPYVWGQYDLLILPPSFPYGGMENPCLTFVTPTVLAGDRSLASVIAHEISHSWTGNLVTNETWENFWLNEGHTVYLERRIDGRLYGEEFRQFKALGGWKELQNSVNTFGATNPLTNLVPNLHEVDVDAAFSSVPYEKGFALLFYLEQLLGGPEIFLGFLKSYIQMFAFKSVTTEEWKKFLYSYFKDKVDILDKVDWKGWMHTPGMPPVQPKYDMTLANACITLGQKWVKATESDLGSFSADDVKDLSSHQLIEVLAILLLEKPLPVSHVKRMQEVYNLNDVKNSEIRFRWLRLCIRAGWEDVIPLALAMATEQGRMKFTRPLYRDLYNFEKAREQTVNTFLKNRSFMHPVTEMLVAKDLHISAS</sequence>
<proteinExistence type="evidence at protein level"/>
<name>LKHA4_XENLA</name>
<comment type="function">
    <text evidence="5 6 7">Bifunctional zinc metalloenzyme that comprises both epoxide hydrolase (EH) and aminopeptidase activities (PubMed:24333438, PubMed:8706657, PubMed:9744798). Acts as an epoxide hydrolase to catalyze the conversion of leukotriene A4 (LTA4) to the pro-inflammatory mediator leukotriene B4 (LTB4) (PubMed:24333438, PubMed:8706657, PubMed:9744798). During the conversion of LTA4 to LTB4, a second product is formed, the isomeric delta6-trans-delta8-cis-LTB4 (5S,12R-dihydroxy-6,10-trans-8,14-cis-eicosatetraenoic acid), with a relative formation of 10% delta6-trans-delta8-cis-LTB4 compared to 90% LTB4 (PubMed:8706657, PubMed:9744798). The production of delta6-trans-delta8-cis-LTB4 seems to depend on the phenylalanine residue at position 375 (PubMed:8706657, PubMed:9744798). Also has aminopeptidase activity (PubMed:24333438).</text>
</comment>
<comment type="catalytic activity">
    <reaction evidence="5">
        <text>Release of the N-terminal residue from a tripeptide.</text>
        <dbReference type="EC" id="3.4.11.4"/>
    </reaction>
</comment>
<comment type="catalytic activity">
    <molecule>Leukotriene A-4 hydrolase</molecule>
    <reaction evidence="4 5">
        <text>leukotriene A4 + H2O = leukotriene B4</text>
        <dbReference type="Rhea" id="RHEA:22324"/>
        <dbReference type="ChEBI" id="CHEBI:15377"/>
        <dbReference type="ChEBI" id="CHEBI:57461"/>
        <dbReference type="ChEBI" id="CHEBI:57463"/>
        <dbReference type="EC" id="3.3.2.6"/>
    </reaction>
    <physiologicalReaction direction="left-to-right" evidence="5">
        <dbReference type="Rhea" id="RHEA:22325"/>
    </physiologicalReaction>
</comment>
<comment type="cofactor">
    <cofactor evidence="3 4 5 7">
        <name>Zn(2+)</name>
        <dbReference type="ChEBI" id="CHEBI:29105"/>
    </cofactor>
    <text evidence="3 4 5 7">Binds 1 zinc ion per subunit.</text>
</comment>
<comment type="activity regulation">
    <text evidence="5 7">The epoxide hydrolase activity is mildly restrained by suicide inactivation, possibly involving binding of LTA4 to Tyr-380.</text>
</comment>
<comment type="biophysicochemical properties">
    <kinetics>
        <KM evidence="5">45 uM for LTA4 at room temperature, pH 7.8</KM>
        <KM evidence="5">2.6 mM for alanine-4-nitroanilide at room temperature, pH 7.8</KM>
    </kinetics>
    <phDependence>
        <text evidence="7">Optimum pH is 8.5 at room temperature (with LTA4 as substrate) (PubMed:9744798). Optimum pH is 7.5 at room temperature (with alanine-4-nitroanilide as substrate) (PubMed:9744798).</text>
    </phDependence>
</comment>
<comment type="pathway">
    <text evidence="4 5 6 7">Lipid metabolism; leukotriene B4 biosynthesis.</text>
</comment>
<comment type="subunit">
    <text evidence="5">Homodimer.</text>
</comment>
<comment type="subcellular location">
    <subcellularLocation>
        <location evidence="4 7">Cytoplasm</location>
    </subcellularLocation>
</comment>
<comment type="tissue specificity">
    <text evidence="7">Expressed in oocytes.</text>
</comment>
<comment type="miscellaneous">
    <text evidence="8">The epoxide hydrolase activity of the human LTA4H is restrained by suicide inactivation that involves binding of LTA4 to Tyr-379 (Probable). In Xenopus laevis, as well as in lower vertebrates species such as fish and insects, tyrosine at position 375 is a phenylalanine, which reduces the sensitivity of X.laevis LTA4H to suicide inactivation (Probable).</text>
</comment>
<comment type="similarity">
    <text evidence="4">Belongs to the peptidase M1 family.</text>
</comment>
<gene>
    <name evidence="12" type="primary">lta4h.L</name>
    <name evidence="9" type="synonym">MGC78867</name>
</gene>
<reference evidence="9" key="1">
    <citation type="submission" date="2004-06" db="EMBL/GenBank/DDBJ databases">
        <authorList>
            <consortium name="NIH - Xenopus Gene Collection (XGC) project"/>
        </authorList>
    </citation>
    <scope>NUCLEOTIDE SEQUENCE [LARGE SCALE MRNA]</scope>
    <source>
        <tissue evidence="9">Lung</tissue>
    </source>
</reference>
<reference key="2">
    <citation type="journal article" date="1996" name="Eur. J. Biochem.">
        <title>Formation of a novel enzymatic metabolite of leukotriene A4 in tissues of Xenopus laevis.</title>
        <authorList>
            <person name="Stroemberg F."/>
            <person name="Hamberg M."/>
            <person name="Rosenzvist U."/>
            <person name="Dahlen S.E."/>
            <person name="Haeggstroem J.Z."/>
        </authorList>
    </citation>
    <scope>FUNCTION</scope>
</reference>
<reference key="3">
    <citation type="journal article" date="1998" name="FEBS Lett.">
        <title>Purification and characterization of leukotriene A4 hydrolase from Xenopus laevis oocytes.</title>
        <authorList>
            <person name="Stroemberg-Kull F."/>
            <person name="Haeggstroem J.Z."/>
        </authorList>
    </citation>
    <scope>FUNCTION</scope>
    <scope>COFACTOR</scope>
    <scope>ACTIVITY REGULATION</scope>
    <scope>BIOPHYSICOCHEMICAL PROPERTIES</scope>
    <scope>SUBCELLULAR LOCATION</scope>
    <scope>TISSUE SPECIFICITY</scope>
</reference>
<reference evidence="11 13" key="4">
    <citation type="journal article" date="2014" name="Biochim. Biophys. Acta">
        <title>Product formation controlled by substrate dynamics in leukotriene A4 hydrolase.</title>
        <authorList>
            <person name="Stsiapanava A."/>
            <person name="Tholander F."/>
            <person name="Kumar R.B."/>
            <person name="Qureshi A.A."/>
            <person name="Niegowski D."/>
            <person name="Hasan M."/>
            <person name="Thunnissen M."/>
            <person name="Haeggstrom J.Z."/>
            <person name="Rinaldo-Matthis A."/>
        </authorList>
    </citation>
    <scope>X-RAY CRYSTALLOGRAPHY (2.26 ANGSTROMS) IN COMPLEX WITH INHIBITOR AND ZINC</scope>
    <scope>FUNCTION</scope>
    <scope>CATALYTIC ACTIVITY</scope>
    <scope>COFACTOR</scope>
    <scope>ACTIVITY REGULATION</scope>
    <scope>BIOPHYSICOCHEMICAL PROPERTIES</scope>
    <scope>SUBUNIT</scope>
    <scope>MUTAGENESIS OF PHE-375</scope>
</reference>
<feature type="chain" id="PRO_0000458018" description="Leukotriene A-4 hydrolase">
    <location>
        <begin position="1"/>
        <end position="609"/>
    </location>
</feature>
<feature type="active site" description="Proton acceptor" evidence="2">
    <location>
        <position position="293"/>
    </location>
</feature>
<feature type="active site" description="Proton donor" evidence="2">
    <location>
        <position position="380"/>
    </location>
</feature>
<feature type="binding site" evidence="1">
    <location>
        <begin position="131"/>
        <end position="133"/>
    </location>
    <ligand>
        <name>a peptide</name>
        <dbReference type="ChEBI" id="CHEBI:60466"/>
    </ligand>
</feature>
<feature type="binding site" evidence="1">
    <location>
        <begin position="263"/>
        <end position="268"/>
    </location>
    <ligand>
        <name>a peptide</name>
        <dbReference type="ChEBI" id="CHEBI:60466"/>
    </ligand>
</feature>
<feature type="binding site" evidence="3 5 13">
    <location>
        <position position="292"/>
    </location>
    <ligand>
        <name>Zn(2+)</name>
        <dbReference type="ChEBI" id="CHEBI:29105"/>
        <note>catalytic</note>
    </ligand>
</feature>
<feature type="binding site" evidence="3 5 13">
    <location>
        <position position="296"/>
    </location>
    <ligand>
        <name>Zn(2+)</name>
        <dbReference type="ChEBI" id="CHEBI:29105"/>
        <note>catalytic</note>
    </ligand>
</feature>
<feature type="binding site" evidence="3 5 13">
    <location>
        <position position="315"/>
    </location>
    <ligand>
        <name>Zn(2+)</name>
        <dbReference type="ChEBI" id="CHEBI:29105"/>
        <note>catalytic</note>
    </ligand>
</feature>
<feature type="binding site" evidence="1">
    <location>
        <begin position="560"/>
        <end position="562"/>
    </location>
    <ligand>
        <name>a peptide</name>
        <dbReference type="ChEBI" id="CHEBI:60466"/>
    </ligand>
</feature>
<feature type="site" description="Pro-Gly-Pro binding" evidence="1">
    <location>
        <position position="268"/>
    </location>
</feature>
<feature type="site" description="Essential for epoxide hydrolase activity, but not for aminopeptidase activity" evidence="1">
    <location>
        <position position="372"/>
    </location>
</feature>
<feature type="site" description="Pro-Gly-Pro binding" evidence="1">
    <location>
        <position position="559"/>
    </location>
</feature>
<feature type="mutagenesis site" description="Increased sensitivity to suicide inactivation. Epoxide hydrolase activity to produce LTB4 intact, but no production of delta6-trans-delta8-cis-LTB4." evidence="5">
    <original>F</original>
    <variation>Y</variation>
    <location>
        <position position="375"/>
    </location>
</feature>
<feature type="turn" evidence="14">
    <location>
        <begin position="10"/>
        <end position="12"/>
    </location>
</feature>
<feature type="strand" evidence="14">
    <location>
        <begin position="13"/>
        <end position="25"/>
    </location>
</feature>
<feature type="turn" evidence="14">
    <location>
        <begin position="26"/>
        <end position="29"/>
    </location>
</feature>
<feature type="strand" evidence="14">
    <location>
        <begin position="30"/>
        <end position="41"/>
    </location>
</feature>
<feature type="strand" evidence="14">
    <location>
        <begin position="48"/>
        <end position="55"/>
    </location>
</feature>
<feature type="strand" evidence="14">
    <location>
        <begin position="57"/>
        <end position="66"/>
    </location>
</feature>
<feature type="strand" evidence="14">
    <location>
        <begin position="69"/>
        <end position="72"/>
    </location>
</feature>
<feature type="strand" evidence="14">
    <location>
        <begin position="77"/>
        <end position="79"/>
    </location>
</feature>
<feature type="strand" evidence="14">
    <location>
        <begin position="81"/>
        <end position="86"/>
    </location>
</feature>
<feature type="strand" evidence="14">
    <location>
        <begin position="96"/>
        <end position="104"/>
    </location>
</feature>
<feature type="strand" evidence="14">
    <location>
        <begin position="112"/>
        <end position="115"/>
    </location>
</feature>
<feature type="turn" evidence="14">
    <location>
        <begin position="117"/>
        <end position="119"/>
    </location>
</feature>
<feature type="strand" evidence="14">
    <location>
        <begin position="120"/>
        <end position="125"/>
    </location>
</feature>
<feature type="strand" evidence="14">
    <location>
        <begin position="127"/>
        <end position="130"/>
    </location>
</feature>
<feature type="turn" evidence="14">
    <location>
        <begin position="133"/>
        <end position="136"/>
    </location>
</feature>
<feature type="helix" evidence="14">
    <location>
        <begin position="137"/>
        <end position="139"/>
    </location>
</feature>
<feature type="strand" evidence="14">
    <location>
        <begin position="150"/>
        <end position="160"/>
    </location>
</feature>
<feature type="strand" evidence="14">
    <location>
        <begin position="163"/>
        <end position="176"/>
    </location>
</feature>
<feature type="strand" evidence="14">
    <location>
        <begin position="183"/>
        <end position="195"/>
    </location>
</feature>
<feature type="helix" evidence="14">
    <location>
        <begin position="196"/>
        <end position="198"/>
    </location>
</feature>
<feature type="strand" evidence="14">
    <location>
        <begin position="201"/>
        <end position="205"/>
    </location>
</feature>
<feature type="strand" evidence="14">
    <location>
        <begin position="207"/>
        <end position="212"/>
    </location>
</feature>
<feature type="strand" evidence="14">
    <location>
        <begin position="215"/>
        <end position="219"/>
    </location>
</feature>
<feature type="helix" evidence="14">
    <location>
        <begin position="221"/>
        <end position="230"/>
    </location>
</feature>
<feature type="turn" evidence="14">
    <location>
        <begin position="231"/>
        <end position="233"/>
    </location>
</feature>
<feature type="helix" evidence="14">
    <location>
        <begin position="234"/>
        <end position="245"/>
    </location>
</feature>
<feature type="strand" evidence="14">
    <location>
        <begin position="254"/>
        <end position="257"/>
    </location>
</feature>
<feature type="strand" evidence="14">
    <location>
        <begin position="263"/>
        <end position="267"/>
    </location>
</feature>
<feature type="strand" evidence="14">
    <location>
        <begin position="272"/>
        <end position="275"/>
    </location>
</feature>
<feature type="helix" evidence="14">
    <location>
        <begin position="277"/>
        <end position="279"/>
    </location>
</feature>
<feature type="strand" evidence="14">
    <location>
        <begin position="282"/>
        <end position="284"/>
    </location>
</feature>
<feature type="turn" evidence="14">
    <location>
        <begin position="285"/>
        <end position="287"/>
    </location>
</feature>
<feature type="helix" evidence="14">
    <location>
        <begin position="288"/>
        <end position="296"/>
    </location>
</feature>
<feature type="turn" evidence="14">
    <location>
        <begin position="300"/>
        <end position="302"/>
    </location>
</feature>
<feature type="strand" evidence="14">
    <location>
        <begin position="303"/>
        <end position="307"/>
    </location>
</feature>
<feature type="helix" evidence="14">
    <location>
        <begin position="308"/>
        <end position="310"/>
    </location>
</feature>
<feature type="helix" evidence="14">
    <location>
        <begin position="311"/>
        <end position="330"/>
    </location>
</feature>
<feature type="helix" evidence="14">
    <location>
        <begin position="332"/>
        <end position="353"/>
    </location>
</feature>
<feature type="helix" evidence="14">
    <location>
        <begin position="358"/>
        <end position="360"/>
    </location>
</feature>
<feature type="strand" evidence="14">
    <location>
        <begin position="361"/>
        <end position="363"/>
    </location>
</feature>
<feature type="turn" evidence="14">
    <location>
        <begin position="371"/>
        <end position="374"/>
    </location>
</feature>
<feature type="helix" evidence="14">
    <location>
        <begin position="378"/>
        <end position="394"/>
    </location>
</feature>
<feature type="helix" evidence="14">
    <location>
        <begin position="397"/>
        <end position="411"/>
    </location>
</feature>
<feature type="strand" evidence="14">
    <location>
        <begin position="414"/>
        <end position="416"/>
    </location>
</feature>
<feature type="helix" evidence="14">
    <location>
        <begin position="418"/>
        <end position="428"/>
    </location>
</feature>
<feature type="strand" evidence="14">
    <location>
        <begin position="430"/>
        <end position="432"/>
    </location>
</feature>
<feature type="helix" evidence="14">
    <location>
        <begin position="433"/>
        <end position="436"/>
    </location>
</feature>
<feature type="helix" evidence="14">
    <location>
        <begin position="441"/>
        <end position="445"/>
    </location>
</feature>
<feature type="turn" evidence="14">
    <location>
        <begin position="460"/>
        <end position="462"/>
    </location>
</feature>
<feature type="helix" evidence="14">
    <location>
        <begin position="463"/>
        <end position="474"/>
    </location>
</feature>
<feature type="turn" evidence="14">
    <location>
        <begin position="477"/>
        <end position="479"/>
    </location>
</feature>
<feature type="helix" evidence="14">
    <location>
        <begin position="480"/>
        <end position="482"/>
    </location>
</feature>
<feature type="helix" evidence="14">
    <location>
        <begin position="486"/>
        <end position="489"/>
    </location>
</feature>
<feature type="helix" evidence="14">
    <location>
        <begin position="493"/>
        <end position="504"/>
    </location>
</feature>
<feature type="strand" evidence="14">
    <location>
        <begin position="505"/>
        <end position="507"/>
    </location>
</feature>
<feature type="helix" evidence="14">
    <location>
        <begin position="511"/>
        <end position="521"/>
    </location>
</feature>
<feature type="helix" evidence="14">
    <location>
        <begin position="523"/>
        <end position="525"/>
    </location>
</feature>
<feature type="helix" evidence="14">
    <location>
        <begin position="529"/>
        <end position="542"/>
    </location>
</feature>
<feature type="helix" evidence="14">
    <location>
        <begin position="545"/>
        <end position="547"/>
    </location>
</feature>
<feature type="helix" evidence="14">
    <location>
        <begin position="548"/>
        <end position="557"/>
    </location>
</feature>
<feature type="helix" evidence="14">
    <location>
        <begin position="561"/>
        <end position="572"/>
    </location>
</feature>
<feature type="turn" evidence="14">
    <location>
        <begin position="575"/>
        <end position="577"/>
    </location>
</feature>
<feature type="helix" evidence="14">
    <location>
        <begin position="578"/>
        <end position="586"/>
    </location>
</feature>
<feature type="turn" evidence="14">
    <location>
        <begin position="587"/>
        <end position="590"/>
    </location>
</feature>
<feature type="helix" evidence="14">
    <location>
        <begin position="594"/>
        <end position="603"/>
    </location>
</feature>
<accession>Q6IP81</accession>
<organism evidence="10">
    <name type="scientific">Xenopus laevis</name>
    <name type="common">African clawed frog</name>
    <dbReference type="NCBI Taxonomy" id="8355"/>
    <lineage>
        <taxon>Eukaryota</taxon>
        <taxon>Metazoa</taxon>
        <taxon>Chordata</taxon>
        <taxon>Craniata</taxon>
        <taxon>Vertebrata</taxon>
        <taxon>Euteleostomi</taxon>
        <taxon>Amphibia</taxon>
        <taxon>Batrachia</taxon>
        <taxon>Anura</taxon>
        <taxon>Pipoidea</taxon>
        <taxon>Pipidae</taxon>
        <taxon>Xenopodinae</taxon>
        <taxon>Xenopus</taxon>
        <taxon>Xenopus</taxon>
    </lineage>
</organism>
<dbReference type="EC" id="3.3.2.6" evidence="4 5"/>
<dbReference type="EC" id="3.4.11.4" evidence="5"/>
<dbReference type="EMBL" id="BC072036">
    <property type="protein sequence ID" value="AAH72036.1"/>
    <property type="molecule type" value="mRNA"/>
</dbReference>
<dbReference type="RefSeq" id="NP_001085236.1">
    <property type="nucleotide sequence ID" value="NM_001091767.1"/>
</dbReference>
<dbReference type="PDB" id="4GAA">
    <property type="method" value="X-ray"/>
    <property type="resolution" value="2.26 A"/>
    <property type="chains" value="A/B=1-609"/>
</dbReference>
<dbReference type="PDBsum" id="4GAA"/>
<dbReference type="SMR" id="Q6IP81"/>
<dbReference type="STRING" id="8355.Q6IP81"/>
<dbReference type="MEROPS" id="M01.004"/>
<dbReference type="PaxDb" id="8355-Q6IP81"/>
<dbReference type="DNASU" id="432332"/>
<dbReference type="GeneID" id="432332"/>
<dbReference type="KEGG" id="xla:432332"/>
<dbReference type="AGR" id="Xenbase:XB-GENE-955982"/>
<dbReference type="CTD" id="432332"/>
<dbReference type="Xenbase" id="XB-GENE-955982">
    <property type="gene designation" value="lta4h.L"/>
</dbReference>
<dbReference type="OMA" id="CTALQWM"/>
<dbReference type="OrthoDB" id="79562at2759"/>
<dbReference type="BRENDA" id="3.3.2.6">
    <property type="organism ID" value="6725"/>
</dbReference>
<dbReference type="UniPathway" id="UPA00878"/>
<dbReference type="CD-CODE" id="78E86D56">
    <property type="entry name" value="Mitochondrial cloud"/>
</dbReference>
<dbReference type="EvolutionaryTrace" id="Q6IP81"/>
<dbReference type="Proteomes" id="UP000186698">
    <property type="component" value="Chromosome 3L"/>
</dbReference>
<dbReference type="Bgee" id="432332">
    <property type="expression patterns" value="Expressed in zone of skin and 20 other cell types or tissues"/>
</dbReference>
<dbReference type="GO" id="GO:0005829">
    <property type="term" value="C:cytosol"/>
    <property type="evidence" value="ECO:0000318"/>
    <property type="project" value="GO_Central"/>
</dbReference>
<dbReference type="GO" id="GO:0005634">
    <property type="term" value="C:nucleus"/>
    <property type="evidence" value="ECO:0000318"/>
    <property type="project" value="GO_Central"/>
</dbReference>
<dbReference type="GO" id="GO:0004177">
    <property type="term" value="F:aminopeptidase activity"/>
    <property type="evidence" value="ECO:0000318"/>
    <property type="project" value="GO_Central"/>
</dbReference>
<dbReference type="GO" id="GO:0004301">
    <property type="term" value="F:epoxide hydrolase activity"/>
    <property type="evidence" value="ECO:0000318"/>
    <property type="project" value="GO_Central"/>
</dbReference>
<dbReference type="GO" id="GO:0004463">
    <property type="term" value="F:leukotriene-A4 hydrolase activity"/>
    <property type="evidence" value="ECO:0000318"/>
    <property type="project" value="GO_Central"/>
</dbReference>
<dbReference type="GO" id="GO:0008237">
    <property type="term" value="F:metallopeptidase activity"/>
    <property type="evidence" value="ECO:0007669"/>
    <property type="project" value="UniProtKB-KW"/>
</dbReference>
<dbReference type="GO" id="GO:0008270">
    <property type="term" value="F:zinc ion binding"/>
    <property type="evidence" value="ECO:0007669"/>
    <property type="project" value="InterPro"/>
</dbReference>
<dbReference type="GO" id="GO:0019370">
    <property type="term" value="P:leukotriene biosynthetic process"/>
    <property type="evidence" value="ECO:0000318"/>
    <property type="project" value="GO_Central"/>
</dbReference>
<dbReference type="GO" id="GO:0043171">
    <property type="term" value="P:peptide catabolic process"/>
    <property type="evidence" value="ECO:0000318"/>
    <property type="project" value="GO_Central"/>
</dbReference>
<dbReference type="GO" id="GO:0006508">
    <property type="term" value="P:proteolysis"/>
    <property type="evidence" value="ECO:0007669"/>
    <property type="project" value="UniProtKB-KW"/>
</dbReference>
<dbReference type="CDD" id="cd09599">
    <property type="entry name" value="M1_LTA4H"/>
    <property type="match status" value="1"/>
</dbReference>
<dbReference type="FunFam" id="1.10.390.10:FF:000003">
    <property type="entry name" value="Leukotriene A(4) hydrolase"/>
    <property type="match status" value="1"/>
</dbReference>
<dbReference type="FunFam" id="1.25.40.320:FF:000001">
    <property type="entry name" value="Leukotriene A(4) hydrolase"/>
    <property type="match status" value="1"/>
</dbReference>
<dbReference type="FunFam" id="2.60.40.1730:FF:000004">
    <property type="entry name" value="Leukotriene A(4) hydrolase"/>
    <property type="match status" value="1"/>
</dbReference>
<dbReference type="FunFam" id="3.30.2010.30:FF:000001">
    <property type="entry name" value="Leukotriene A(4) hydrolase"/>
    <property type="match status" value="1"/>
</dbReference>
<dbReference type="Gene3D" id="3.30.2010.30">
    <property type="match status" value="1"/>
</dbReference>
<dbReference type="Gene3D" id="1.10.390.10">
    <property type="entry name" value="Neutral Protease Domain 2"/>
    <property type="match status" value="1"/>
</dbReference>
<dbReference type="Gene3D" id="1.25.40.320">
    <property type="entry name" value="Peptidase M1, leukotriene A4 hydrolase/aminopeptidase C-terminal domain"/>
    <property type="match status" value="1"/>
</dbReference>
<dbReference type="Gene3D" id="2.60.40.1730">
    <property type="entry name" value="tricorn interacting facor f3 domain"/>
    <property type="match status" value="1"/>
</dbReference>
<dbReference type="InterPro" id="IPR045357">
    <property type="entry name" value="Aminopeptidase_N-like_N"/>
</dbReference>
<dbReference type="InterPro" id="IPR042097">
    <property type="entry name" value="Aminopeptidase_N-like_N_sf"/>
</dbReference>
<dbReference type="InterPro" id="IPR016024">
    <property type="entry name" value="ARM-type_fold"/>
</dbReference>
<dbReference type="InterPro" id="IPR012777">
    <property type="entry name" value="LTA4H"/>
</dbReference>
<dbReference type="InterPro" id="IPR049980">
    <property type="entry name" value="LTA4H_cat"/>
</dbReference>
<dbReference type="InterPro" id="IPR038502">
    <property type="entry name" value="M1_LTA-4_hydro/amino_C_sf"/>
</dbReference>
<dbReference type="InterPro" id="IPR034015">
    <property type="entry name" value="M1_LTA4H"/>
</dbReference>
<dbReference type="InterPro" id="IPR001930">
    <property type="entry name" value="Peptidase_M1"/>
</dbReference>
<dbReference type="InterPro" id="IPR015211">
    <property type="entry name" value="Peptidase_M1_C"/>
</dbReference>
<dbReference type="InterPro" id="IPR014782">
    <property type="entry name" value="Peptidase_M1_dom"/>
</dbReference>
<dbReference type="InterPro" id="IPR027268">
    <property type="entry name" value="Peptidase_M4/M1_CTD_sf"/>
</dbReference>
<dbReference type="NCBIfam" id="TIGR02411">
    <property type="entry name" value="leuko_A4_hydro"/>
    <property type="match status" value="1"/>
</dbReference>
<dbReference type="PANTHER" id="PTHR45726">
    <property type="entry name" value="LEUKOTRIENE A-4 HYDROLASE"/>
    <property type="match status" value="1"/>
</dbReference>
<dbReference type="PANTHER" id="PTHR45726:SF3">
    <property type="entry name" value="LEUKOTRIENE A-4 HYDROLASE"/>
    <property type="match status" value="1"/>
</dbReference>
<dbReference type="Pfam" id="PF09127">
    <property type="entry name" value="Leuk-A4-hydro_C"/>
    <property type="match status" value="1"/>
</dbReference>
<dbReference type="Pfam" id="PF01433">
    <property type="entry name" value="Peptidase_M1"/>
    <property type="match status" value="1"/>
</dbReference>
<dbReference type="Pfam" id="PF17900">
    <property type="entry name" value="Peptidase_M1_N"/>
    <property type="match status" value="1"/>
</dbReference>
<dbReference type="PRINTS" id="PR00756">
    <property type="entry name" value="ALADIPTASE"/>
</dbReference>
<dbReference type="SMART" id="SM01263">
    <property type="entry name" value="Leuk-A4-hydro_C"/>
    <property type="match status" value="1"/>
</dbReference>
<dbReference type="SUPFAM" id="SSF48371">
    <property type="entry name" value="ARM repeat"/>
    <property type="match status" value="1"/>
</dbReference>
<dbReference type="SUPFAM" id="SSF63737">
    <property type="entry name" value="Leukotriene A4 hydrolase N-terminal domain"/>
    <property type="match status" value="1"/>
</dbReference>
<dbReference type="SUPFAM" id="SSF55486">
    <property type="entry name" value="Metalloproteases ('zincins'), catalytic domain"/>
    <property type="match status" value="1"/>
</dbReference>